<feature type="chain" id="PRO_0000395326" description="KHDC1-like protein">
    <location>
        <begin position="1"/>
        <end position="128"/>
    </location>
</feature>
<dbReference type="EMBL" id="AL365232">
    <property type="status" value="NOT_ANNOTATED_CDS"/>
    <property type="molecule type" value="Genomic_DNA"/>
</dbReference>
<dbReference type="EMBL" id="CH471051">
    <property type="protein sequence ID" value="EAW48776.1"/>
    <property type="molecule type" value="Genomic_DNA"/>
</dbReference>
<dbReference type="EMBL" id="CH471051">
    <property type="protein sequence ID" value="EAW48777.1"/>
    <property type="molecule type" value="Genomic_DNA"/>
</dbReference>
<dbReference type="EMBL" id="CH471051">
    <property type="protein sequence ID" value="EAW48779.1"/>
    <property type="molecule type" value="Genomic_DNA"/>
</dbReference>
<dbReference type="EMBL" id="BC004267">
    <property type="status" value="NOT_ANNOTATED_CDS"/>
    <property type="molecule type" value="mRNA"/>
</dbReference>
<dbReference type="CCDS" id="CCDS47450.1"/>
<dbReference type="RefSeq" id="NP_001119535.1">
    <property type="nucleotide sequence ID" value="NM_001126063.3"/>
</dbReference>
<dbReference type="SMR" id="Q5JSQ8"/>
<dbReference type="FunCoup" id="Q5JSQ8">
    <property type="interactions" value="11"/>
</dbReference>
<dbReference type="IntAct" id="Q5JSQ8">
    <property type="interactions" value="2"/>
</dbReference>
<dbReference type="MINT" id="Q5JSQ8"/>
<dbReference type="STRING" id="9606.ENSP00000359415"/>
<dbReference type="BioMuta" id="KHDC1L"/>
<dbReference type="jPOST" id="Q5JSQ8"/>
<dbReference type="MassIVE" id="Q5JSQ8"/>
<dbReference type="PaxDb" id="9606-ENSP00000359415"/>
<dbReference type="PeptideAtlas" id="Q5JSQ8"/>
<dbReference type="Antibodypedia" id="81905">
    <property type="antibodies" value="2 antibodies from 2 providers"/>
</dbReference>
<dbReference type="DNASU" id="100129128"/>
<dbReference type="Ensembl" id="ENST00000370388.4">
    <property type="protein sequence ID" value="ENSP00000359415.3"/>
    <property type="gene ID" value="ENSG00000256980.5"/>
</dbReference>
<dbReference type="GeneID" id="100129128"/>
<dbReference type="KEGG" id="hsa:100129128"/>
<dbReference type="MANE-Select" id="ENST00000370388.4">
    <property type="protein sequence ID" value="ENSP00000359415.3"/>
    <property type="RefSeq nucleotide sequence ID" value="NM_001126063.3"/>
    <property type="RefSeq protein sequence ID" value="NP_001119535.1"/>
</dbReference>
<dbReference type="UCSC" id="uc003pgm.5">
    <property type="organism name" value="human"/>
</dbReference>
<dbReference type="AGR" id="HGNC:37274"/>
<dbReference type="CTD" id="100129128"/>
<dbReference type="GeneCards" id="KHDC1L"/>
<dbReference type="HGNC" id="HGNC:37274">
    <property type="gene designation" value="KHDC1L"/>
</dbReference>
<dbReference type="HPA" id="ENSG00000256980">
    <property type="expression patterns" value="Group enriched (brain, testis)"/>
</dbReference>
<dbReference type="neXtProt" id="NX_Q5JSQ8"/>
<dbReference type="OpenTargets" id="ENSG00000256980"/>
<dbReference type="PharmGKB" id="PA165617988"/>
<dbReference type="VEuPathDB" id="HostDB:ENSG00000256980"/>
<dbReference type="eggNOG" id="ENOG502TCCK">
    <property type="taxonomic scope" value="Eukaryota"/>
</dbReference>
<dbReference type="GeneTree" id="ENSGT00940000154353"/>
<dbReference type="HOGENOM" id="CLU_102222_1_0_1"/>
<dbReference type="InParanoid" id="Q5JSQ8"/>
<dbReference type="OMA" id="ENFHSPM"/>
<dbReference type="OrthoDB" id="9835352at2759"/>
<dbReference type="PAN-GO" id="Q5JSQ8">
    <property type="GO annotations" value="3 GO annotations based on evolutionary models"/>
</dbReference>
<dbReference type="PhylomeDB" id="Q5JSQ8"/>
<dbReference type="PathwayCommons" id="Q5JSQ8"/>
<dbReference type="BioGRID-ORCS" id="100129128">
    <property type="hits" value="13 hits in 1143 CRISPR screens"/>
</dbReference>
<dbReference type="GenomeRNAi" id="100129128"/>
<dbReference type="Pharos" id="Q5JSQ8">
    <property type="development level" value="Tdark"/>
</dbReference>
<dbReference type="Proteomes" id="UP000005640">
    <property type="component" value="Chromosome 6"/>
</dbReference>
<dbReference type="RNAct" id="Q5JSQ8">
    <property type="molecule type" value="protein"/>
</dbReference>
<dbReference type="Bgee" id="ENSG00000256980">
    <property type="expression patterns" value="Expressed in male germ line stem cell (sensu Vertebrata) in testis and 83 other cell types or tissues"/>
</dbReference>
<dbReference type="GO" id="GO:0005737">
    <property type="term" value="C:cytoplasm"/>
    <property type="evidence" value="ECO:0000318"/>
    <property type="project" value="GO_Central"/>
</dbReference>
<dbReference type="GO" id="GO:0003723">
    <property type="term" value="F:RNA binding"/>
    <property type="evidence" value="ECO:0000318"/>
    <property type="project" value="GO_Central"/>
</dbReference>
<dbReference type="CDD" id="cd12795">
    <property type="entry name" value="FILIA_N_like"/>
    <property type="match status" value="1"/>
</dbReference>
<dbReference type="FunFam" id="3.30.1370.10:FF:000071">
    <property type="entry name" value="KH domain containing 1 like"/>
    <property type="match status" value="1"/>
</dbReference>
<dbReference type="Gene3D" id="3.30.1370.10">
    <property type="entry name" value="K Homology domain, type 1"/>
    <property type="match status" value="1"/>
</dbReference>
<dbReference type="InterPro" id="IPR036612">
    <property type="entry name" value="KH_dom_type_1_sf"/>
</dbReference>
<dbReference type="InterPro" id="IPR031952">
    <property type="entry name" value="MOEP19_KH-like"/>
</dbReference>
<dbReference type="PANTHER" id="PTHR31368">
    <property type="entry name" value="DEVELOPMENT PLURPOTENCY-ASSOCIATED PROTEIN 1/5 FAMILY MEMBER"/>
    <property type="match status" value="1"/>
</dbReference>
<dbReference type="PANTHER" id="PTHR31368:SF5">
    <property type="entry name" value="KHDC1-LIKE PROTEIN-RELATED"/>
    <property type="match status" value="1"/>
</dbReference>
<dbReference type="Pfam" id="PF16005">
    <property type="entry name" value="MOEP19"/>
    <property type="match status" value="1"/>
</dbReference>
<accession>Q5JSQ8</accession>
<accession>E1P535</accession>
<reference key="1">
    <citation type="journal article" date="2003" name="Nature">
        <title>The DNA sequence and analysis of human chromosome 6.</title>
        <authorList>
            <person name="Mungall A.J."/>
            <person name="Palmer S.A."/>
            <person name="Sims S.K."/>
            <person name="Edwards C.A."/>
            <person name="Ashurst J.L."/>
            <person name="Wilming L."/>
            <person name="Jones M.C."/>
            <person name="Horton R."/>
            <person name="Hunt S.E."/>
            <person name="Scott C.E."/>
            <person name="Gilbert J.G.R."/>
            <person name="Clamp M.E."/>
            <person name="Bethel G."/>
            <person name="Milne S."/>
            <person name="Ainscough R."/>
            <person name="Almeida J.P."/>
            <person name="Ambrose K.D."/>
            <person name="Andrews T.D."/>
            <person name="Ashwell R.I.S."/>
            <person name="Babbage A.K."/>
            <person name="Bagguley C.L."/>
            <person name="Bailey J."/>
            <person name="Banerjee R."/>
            <person name="Barker D.J."/>
            <person name="Barlow K.F."/>
            <person name="Bates K."/>
            <person name="Beare D.M."/>
            <person name="Beasley H."/>
            <person name="Beasley O."/>
            <person name="Bird C.P."/>
            <person name="Blakey S.E."/>
            <person name="Bray-Allen S."/>
            <person name="Brook J."/>
            <person name="Brown A.J."/>
            <person name="Brown J.Y."/>
            <person name="Burford D.C."/>
            <person name="Burrill W."/>
            <person name="Burton J."/>
            <person name="Carder C."/>
            <person name="Carter N.P."/>
            <person name="Chapman J.C."/>
            <person name="Clark S.Y."/>
            <person name="Clark G."/>
            <person name="Clee C.M."/>
            <person name="Clegg S."/>
            <person name="Cobley V."/>
            <person name="Collier R.E."/>
            <person name="Collins J.E."/>
            <person name="Colman L.K."/>
            <person name="Corby N.R."/>
            <person name="Coville G.J."/>
            <person name="Culley K.M."/>
            <person name="Dhami P."/>
            <person name="Davies J."/>
            <person name="Dunn M."/>
            <person name="Earthrowl M.E."/>
            <person name="Ellington A.E."/>
            <person name="Evans K.A."/>
            <person name="Faulkner L."/>
            <person name="Francis M.D."/>
            <person name="Frankish A."/>
            <person name="Frankland J."/>
            <person name="French L."/>
            <person name="Garner P."/>
            <person name="Garnett J."/>
            <person name="Ghori M.J."/>
            <person name="Gilby L.M."/>
            <person name="Gillson C.J."/>
            <person name="Glithero R.J."/>
            <person name="Grafham D.V."/>
            <person name="Grant M."/>
            <person name="Gribble S."/>
            <person name="Griffiths C."/>
            <person name="Griffiths M.N.D."/>
            <person name="Hall R."/>
            <person name="Halls K.S."/>
            <person name="Hammond S."/>
            <person name="Harley J.L."/>
            <person name="Hart E.A."/>
            <person name="Heath P.D."/>
            <person name="Heathcott R."/>
            <person name="Holmes S.J."/>
            <person name="Howden P.J."/>
            <person name="Howe K.L."/>
            <person name="Howell G.R."/>
            <person name="Huckle E."/>
            <person name="Humphray S.J."/>
            <person name="Humphries M.D."/>
            <person name="Hunt A.R."/>
            <person name="Johnson C.M."/>
            <person name="Joy A.A."/>
            <person name="Kay M."/>
            <person name="Keenan S.J."/>
            <person name="Kimberley A.M."/>
            <person name="King A."/>
            <person name="Laird G.K."/>
            <person name="Langford C."/>
            <person name="Lawlor S."/>
            <person name="Leongamornlert D.A."/>
            <person name="Leversha M."/>
            <person name="Lloyd C.R."/>
            <person name="Lloyd D.M."/>
            <person name="Loveland J.E."/>
            <person name="Lovell J."/>
            <person name="Martin S."/>
            <person name="Mashreghi-Mohammadi M."/>
            <person name="Maslen G.L."/>
            <person name="Matthews L."/>
            <person name="McCann O.T."/>
            <person name="McLaren S.J."/>
            <person name="McLay K."/>
            <person name="McMurray A."/>
            <person name="Moore M.J.F."/>
            <person name="Mullikin J.C."/>
            <person name="Niblett D."/>
            <person name="Nickerson T."/>
            <person name="Novik K.L."/>
            <person name="Oliver K."/>
            <person name="Overton-Larty E.K."/>
            <person name="Parker A."/>
            <person name="Patel R."/>
            <person name="Pearce A.V."/>
            <person name="Peck A.I."/>
            <person name="Phillimore B.J.C.T."/>
            <person name="Phillips S."/>
            <person name="Plumb R.W."/>
            <person name="Porter K.M."/>
            <person name="Ramsey Y."/>
            <person name="Ranby S.A."/>
            <person name="Rice C.M."/>
            <person name="Ross M.T."/>
            <person name="Searle S.M."/>
            <person name="Sehra H.K."/>
            <person name="Sheridan E."/>
            <person name="Skuce C.D."/>
            <person name="Smith S."/>
            <person name="Smith M."/>
            <person name="Spraggon L."/>
            <person name="Squares S.L."/>
            <person name="Steward C.A."/>
            <person name="Sycamore N."/>
            <person name="Tamlyn-Hall G."/>
            <person name="Tester J."/>
            <person name="Theaker A.J."/>
            <person name="Thomas D.W."/>
            <person name="Thorpe A."/>
            <person name="Tracey A."/>
            <person name="Tromans A."/>
            <person name="Tubby B."/>
            <person name="Wall M."/>
            <person name="Wallis J.M."/>
            <person name="West A.P."/>
            <person name="White S.S."/>
            <person name="Whitehead S.L."/>
            <person name="Whittaker H."/>
            <person name="Wild A."/>
            <person name="Willey D.J."/>
            <person name="Wilmer T.E."/>
            <person name="Wood J.M."/>
            <person name="Wray P.W."/>
            <person name="Wyatt J.C."/>
            <person name="Young L."/>
            <person name="Younger R.M."/>
            <person name="Bentley D.R."/>
            <person name="Coulson A."/>
            <person name="Durbin R.M."/>
            <person name="Hubbard T."/>
            <person name="Sulston J.E."/>
            <person name="Dunham I."/>
            <person name="Rogers J."/>
            <person name="Beck S."/>
        </authorList>
    </citation>
    <scope>NUCLEOTIDE SEQUENCE [LARGE SCALE GENOMIC DNA]</scope>
</reference>
<reference key="2">
    <citation type="submission" date="2005-09" db="EMBL/GenBank/DDBJ databases">
        <authorList>
            <person name="Mural R.J."/>
            <person name="Istrail S."/>
            <person name="Sutton G.G."/>
            <person name="Florea L."/>
            <person name="Halpern A.L."/>
            <person name="Mobarry C.M."/>
            <person name="Lippert R."/>
            <person name="Walenz B."/>
            <person name="Shatkay H."/>
            <person name="Dew I."/>
            <person name="Miller J.R."/>
            <person name="Flanigan M.J."/>
            <person name="Edwards N.J."/>
            <person name="Bolanos R."/>
            <person name="Fasulo D."/>
            <person name="Halldorsson B.V."/>
            <person name="Hannenhalli S."/>
            <person name="Turner R."/>
            <person name="Yooseph S."/>
            <person name="Lu F."/>
            <person name="Nusskern D.R."/>
            <person name="Shue B.C."/>
            <person name="Zheng X.H."/>
            <person name="Zhong F."/>
            <person name="Delcher A.L."/>
            <person name="Huson D.H."/>
            <person name="Kravitz S.A."/>
            <person name="Mouchard L."/>
            <person name="Reinert K."/>
            <person name="Remington K.A."/>
            <person name="Clark A.G."/>
            <person name="Waterman M.S."/>
            <person name="Eichler E.E."/>
            <person name="Adams M.D."/>
            <person name="Hunkapiller M.W."/>
            <person name="Myers E.W."/>
            <person name="Venter J.C."/>
        </authorList>
    </citation>
    <scope>NUCLEOTIDE SEQUENCE [LARGE SCALE GENOMIC DNA]</scope>
</reference>
<reference key="3">
    <citation type="journal article" date="2004" name="Genome Res.">
        <title>The status, quality, and expansion of the NIH full-length cDNA project: the Mammalian Gene Collection (MGC).</title>
        <authorList>
            <consortium name="The MGC Project Team"/>
        </authorList>
    </citation>
    <scope>NUCLEOTIDE SEQUENCE [LARGE SCALE MRNA]</scope>
    <source>
        <tissue>Uterus</tissue>
    </source>
</reference>
<proteinExistence type="evidence at protein level"/>
<name>KHDCL_HUMAN</name>
<organism>
    <name type="scientific">Homo sapiens</name>
    <name type="common">Human</name>
    <dbReference type="NCBI Taxonomy" id="9606"/>
    <lineage>
        <taxon>Eukaryota</taxon>
        <taxon>Metazoa</taxon>
        <taxon>Chordata</taxon>
        <taxon>Craniata</taxon>
        <taxon>Vertebrata</taxon>
        <taxon>Euteleostomi</taxon>
        <taxon>Mammalia</taxon>
        <taxon>Eutheria</taxon>
        <taxon>Euarchontoglires</taxon>
        <taxon>Primates</taxon>
        <taxon>Haplorrhini</taxon>
        <taxon>Catarrhini</taxon>
        <taxon>Hominidae</taxon>
        <taxon>Homo</taxon>
    </lineage>
</organism>
<keyword id="KW-1267">Proteomics identification</keyword>
<keyword id="KW-1185">Reference proteome</keyword>
<gene>
    <name type="primary">KHDC1L</name>
</gene>
<evidence type="ECO:0000305" key="1"/>
<comment type="similarity">
    <text evidence="1">Belongs to the KHDC1 family.</text>
</comment>
<protein>
    <recommendedName>
        <fullName>KHDC1-like protein</fullName>
    </recommendedName>
</protein>
<sequence>MAVGTSALSKEPWWTLPENFHSPMVFHMEEDQEELIFGLDDTYLRCIELHSHTLIQLERCFTATGQTRVTVVGPPMAKQWLLLMFHCVGSQDSKCHARGLKMLERVRSQPLTNDDLVTSVSLPPYTGD</sequence>